<keyword id="KW-0027">Amidation</keyword>
<keyword id="KW-0903">Direct protein sequencing</keyword>
<keyword id="KW-1015">Disulfide bond</keyword>
<keyword id="KW-0325">Glycoprotein</keyword>
<keyword id="KW-0379">Hydroxylation</keyword>
<keyword id="KW-0872">Ion channel impairing toxin</keyword>
<keyword id="KW-0528">Neurotoxin</keyword>
<keyword id="KW-0873">Pyrrolidone carboxylic acid</keyword>
<keyword id="KW-0964">Secreted</keyword>
<keyword id="KW-0732">Signal</keyword>
<keyword id="KW-0800">Toxin</keyword>
<keyword id="KW-0738">Voltage-gated sodium channel impairing toxin</keyword>
<organism>
    <name type="scientific">Conus striatus</name>
    <name type="common">Striated cone</name>
    <dbReference type="NCBI Taxonomy" id="6493"/>
    <lineage>
        <taxon>Eukaryota</taxon>
        <taxon>Metazoa</taxon>
        <taxon>Spiralia</taxon>
        <taxon>Lophotrochozoa</taxon>
        <taxon>Mollusca</taxon>
        <taxon>Gastropoda</taxon>
        <taxon>Caenogastropoda</taxon>
        <taxon>Neogastropoda</taxon>
        <taxon>Conoidea</taxon>
        <taxon>Conidae</taxon>
        <taxon>Conus</taxon>
        <taxon>Pionoconus</taxon>
    </lineage>
</organism>
<proteinExistence type="evidence at protein level"/>
<accession>P0C829</accession>
<accession>P58921</accession>
<accession>Q8I6N6</accession>
<dbReference type="SMR" id="P0C829"/>
<dbReference type="iPTMnet" id="P0C829"/>
<dbReference type="ConoServer" id="2523">
    <property type="toxin name" value="SIVB precursor"/>
</dbReference>
<dbReference type="GO" id="GO:0005576">
    <property type="term" value="C:extracellular region"/>
    <property type="evidence" value="ECO:0007669"/>
    <property type="project" value="UniProtKB-SubCell"/>
</dbReference>
<dbReference type="GO" id="GO:0030550">
    <property type="term" value="F:acetylcholine receptor inhibitor activity"/>
    <property type="evidence" value="ECO:0007669"/>
    <property type="project" value="InterPro"/>
</dbReference>
<dbReference type="GO" id="GO:0017080">
    <property type="term" value="F:sodium channel regulator activity"/>
    <property type="evidence" value="ECO:0007669"/>
    <property type="project" value="UniProtKB-KW"/>
</dbReference>
<dbReference type="GO" id="GO:0090729">
    <property type="term" value="F:toxin activity"/>
    <property type="evidence" value="ECO:0007669"/>
    <property type="project" value="UniProtKB-KW"/>
</dbReference>
<dbReference type="InterPro" id="IPR009958">
    <property type="entry name" value="Conotoxin_a-typ"/>
</dbReference>
<dbReference type="Pfam" id="PF07365">
    <property type="entry name" value="Toxin_8"/>
    <property type="match status" value="1"/>
</dbReference>
<sequence>MGMRMMFTVFLSVVLATTVVSTPSDRASDGRNAAVHERQKELVPSVITTCCGYDPGTMCPPCRCTNSCPTKPKKPGRRND</sequence>
<name>CA4B_CONST</name>
<protein>
    <recommendedName>
        <fullName evidence="3">Conotoxin SIVB</fullName>
    </recommendedName>
    <alternativeName>
        <fullName>Conotoxin S4.2</fullName>
    </alternativeName>
    <alternativeName>
        <fullName evidence="4">Conotoxin s4b</fullName>
    </alternativeName>
    <alternativeName>
        <fullName evidence="3">KappaA-conotoxin</fullName>
    </alternativeName>
</protein>
<comment type="function">
    <text evidence="2 7">Neurotoxin with probable activity on sodium channel (Probable). Induces intense repetitive firing of the frog neuromuscular junction, leading to a tetanic contracture in muscle fiber (spastic paralysis) (PubMed:17115716). In vivo, shows the same effect as the whole venom when injected on fish prey (PubMed:17115716).</text>
</comment>
<comment type="subcellular location">
    <subcellularLocation>
        <location evidence="6">Secreted</location>
    </subcellularLocation>
</comment>
<comment type="tissue specificity">
    <text evidence="6">Expressed by the venom duct.</text>
</comment>
<comment type="domain">
    <text evidence="5">The cysteine framework is IV (CC-C-C-C-C).</text>
</comment>
<comment type="PTM">
    <text evidence="7">Contains 3 disulfide bonds.</text>
</comment>
<comment type="PTM">
    <text evidence="2">O-linked glycan consists of Hex3-HexNAc2 pentasaccharide.</text>
</comment>
<comment type="mass spectrometry">
    <text>Monoisotopic mass.</text>
</comment>
<comment type="miscellaneous">
    <text evidence="6">Is only found in C.striatus specimens collected from the Hawaiian Islands.</text>
</comment>
<comment type="similarity">
    <text evidence="5">Belongs to the conotoxin A superfamily.</text>
</comment>
<reference key="1">
    <citation type="journal article" date="2004" name="J. Biol. Chem.">
        <title>The A-superfamily of conotoxins: structural and functional divergence.</title>
        <authorList>
            <person name="Santos A.D."/>
            <person name="McIntosh J.M."/>
            <person name="Hillyard D.R."/>
            <person name="Cruz L.J."/>
            <person name="Olivera B.M."/>
        </authorList>
    </citation>
    <scope>NUCLEOTIDE SEQUENCE [MRNA]</scope>
    <scope>PROBABLE PYROGLUTAMATE FORMATION AT GLN-39</scope>
    <source>
        <strain>Isolate Hawaiian Islands</strain>
        <tissue>Venom duct</tissue>
    </source>
</reference>
<reference key="2">
    <citation type="journal article" date="2006" name="Biochemistry">
        <title>Two toxins from Conus striatus that individually induce tetanic paralysis.</title>
        <authorList>
            <person name="Kelley W.P."/>
            <person name="Schulz J.R."/>
            <person name="Jakubowski J.A."/>
            <person name="Gilly W.F."/>
            <person name="Sweedler J.V."/>
        </authorList>
    </citation>
    <scope>NUCLEOTIDE SEQUENCE [MRNA]</scope>
    <scope>PROTEIN SEQUENCE OF 39-75</scope>
    <scope>FUNCTION</scope>
    <scope>BIOASSAY</scope>
    <scope>MASS SPECTROMETRY</scope>
    <scope>PYROGLUTAMATE FORMATION AT GLN-39</scope>
    <scope>GLYCOSYLATION AT SER-45</scope>
    <scope>HYDROXYLATION AT PRO-55; PRO-60; PRO-61; PRO-69; PRO-72 AND PRO-75</scope>
    <scope>AMIDATION AT PRO-75</scope>
    <source>
        <tissue>Venom</tissue>
        <tissue>Venom duct</tissue>
    </source>
</reference>
<feature type="signal peptide" evidence="1">
    <location>
        <begin position="1"/>
        <end position="21"/>
    </location>
</feature>
<feature type="propeptide" id="PRO_0000345097" evidence="7">
    <location>
        <begin position="22"/>
        <end position="38"/>
    </location>
</feature>
<feature type="peptide" id="PRO_0000345098" description="Conotoxin SIVB" evidence="2">
    <location>
        <begin position="39"/>
        <end position="75"/>
    </location>
</feature>
<feature type="propeptide" id="PRO_0000458103" evidence="7">
    <location>
        <begin position="76"/>
        <end position="80"/>
    </location>
</feature>
<feature type="modified residue" description="Pyrrolidone carboxylic acid" evidence="2">
    <location>
        <position position="39"/>
    </location>
</feature>
<feature type="modified residue" description="4-hydroxyproline" evidence="2">
    <location>
        <position position="55"/>
    </location>
</feature>
<feature type="modified residue" description="4-hydroxyproline" evidence="2">
    <location>
        <position position="60"/>
    </location>
</feature>
<feature type="modified residue" description="4-hydroxyproline" evidence="2">
    <location>
        <position position="61"/>
    </location>
</feature>
<feature type="modified residue" description="4-hydroxyproline" evidence="2">
    <location>
        <position position="69"/>
    </location>
</feature>
<feature type="modified residue" description="4-hydroxyproline" evidence="2">
    <location>
        <position position="72"/>
    </location>
</feature>
<feature type="modified residue" description="4-hydroxyproline" evidence="2">
    <location>
        <position position="75"/>
    </location>
</feature>
<feature type="modified residue" description="Proline amide" evidence="2">
    <location>
        <position position="75"/>
    </location>
</feature>
<feature type="glycosylation site" description="O-linked (HexNAc...) serine" evidence="2">
    <location>
        <position position="45"/>
    </location>
</feature>
<evidence type="ECO:0000255" key="1"/>
<evidence type="ECO:0000269" key="2">
    <source>
    </source>
</evidence>
<evidence type="ECO:0000303" key="3">
    <source>
    </source>
</evidence>
<evidence type="ECO:0000303" key="4">
    <source>
    </source>
</evidence>
<evidence type="ECO:0000305" key="5"/>
<evidence type="ECO:0000305" key="6">
    <source>
    </source>
</evidence>
<evidence type="ECO:0000305" key="7">
    <source>
    </source>
</evidence>